<reference key="1">
    <citation type="journal article" date="2008" name="J. Bacteriol.">
        <title>Genome sequence of Staphylococcus aureus strain Newman and comparative analysis of staphylococcal genomes: polymorphism and evolution of two major pathogenicity islands.</title>
        <authorList>
            <person name="Baba T."/>
            <person name="Bae T."/>
            <person name="Schneewind O."/>
            <person name="Takeuchi F."/>
            <person name="Hiramatsu K."/>
        </authorList>
    </citation>
    <scope>NUCLEOTIDE SEQUENCE [LARGE SCALE GENOMIC DNA]</scope>
    <source>
        <strain>Newman</strain>
    </source>
</reference>
<reference key="2">
    <citation type="journal article" date="2011" name="BMC Microbiol.">
        <title>Mutation of L-2,3-diaminopropionic acid synthase genes blocks staphyloferrin B synthesis in Staphylococcus aureus.</title>
        <authorList>
            <person name="Beasley F.C."/>
            <person name="Cheung J."/>
            <person name="Heinrichs D.E."/>
        </authorList>
    </citation>
    <scope>FUNCTION</scope>
    <scope>PATHWAY</scope>
</reference>
<reference key="3">
    <citation type="journal article" date="2014" name="Chem. Biol.">
        <title>Synthesis of L-2,3-diaminopropionic acid, a siderophore and antibiotic precursor.</title>
        <authorList>
            <person name="Kobylarz M.J."/>
            <person name="Grigg J.C."/>
            <person name="Takayama S.J."/>
            <person name="Rai D.K."/>
            <person name="Heinrichs D.E."/>
            <person name="Murphy M.E."/>
        </authorList>
    </citation>
    <scope>FUNCTION</scope>
    <scope>CATALYTIC ACTIVITY</scope>
    <scope>COFACTOR</scope>
</reference>
<reference key="4">
    <citation type="journal article" date="2016" name="Biochemistry">
        <title>Deciphering the substrate specificity of SbnA, the enzyme catalyzing the first step in staphyloferrin B biosynthesis.</title>
        <authorList>
            <person name="Kobylarz M.J."/>
            <person name="Grigg J.C."/>
            <person name="Liu Y."/>
            <person name="Lee M.S."/>
            <person name="Heinrichs D.E."/>
            <person name="Murphy M.E."/>
        </authorList>
    </citation>
    <scope>X-RAY CRYSTALLOGRAPHY (1.45 ANGSTROMS) OF WILD-TYPE AND MUTANTS PHE-152 AND PHE-152/GLY-185 IN COMPLEXES WITH PYRIDOXAL 5'-PHOSPHATE AND O-PHOSPHO-L-SERINE</scope>
    <scope>CATALYTIC ACTIVITY</scope>
    <scope>COFACTOR</scope>
    <scope>MUTAGENESIS OF ARG-132; TYR-152 AND SER-185</scope>
    <scope>SUBUNIT</scope>
</reference>
<comment type="function">
    <text evidence="2 3">Catalyzes the synthesis of N-((2S)-2-amino-2-carboxyethyl)-L-glutamate (ACEGA) from O-phospho-L-serine and L-glutamate. Involved in the biosynthesis of L-2,3-diaminopropionic acid (L-Dap), a precursor of staphyloferrin B and antibiotics.</text>
</comment>
<comment type="catalytic activity">
    <reaction evidence="3 4">
        <text>O-phospho-L-serine + L-glutamate = N-[(2S)-2-amino-2-carboxyethyl]-L-glutamate + phosphate + H(+)</text>
        <dbReference type="Rhea" id="RHEA:52384"/>
        <dbReference type="ChEBI" id="CHEBI:15378"/>
        <dbReference type="ChEBI" id="CHEBI:29985"/>
        <dbReference type="ChEBI" id="CHEBI:43474"/>
        <dbReference type="ChEBI" id="CHEBI:57524"/>
        <dbReference type="ChEBI" id="CHEBI:134610"/>
        <dbReference type="EC" id="2.5.1.140"/>
    </reaction>
    <physiologicalReaction direction="left-to-right" evidence="3 4">
        <dbReference type="Rhea" id="RHEA:52385"/>
    </physiologicalReaction>
</comment>
<comment type="cofactor">
    <cofactor evidence="3 4">
        <name>pyridoxal 5'-phosphate</name>
        <dbReference type="ChEBI" id="CHEBI:597326"/>
    </cofactor>
</comment>
<comment type="pathway">
    <text evidence="2">Siderophore biosynthesis.</text>
</comment>
<comment type="subunit">
    <text evidence="4">Homodimer.</text>
</comment>
<comment type="induction">
    <text evidence="1">Up-regulated under iron-deficient growth conditions. Repressed by Fur under iron-rich growth conditions.</text>
</comment>
<comment type="similarity">
    <text evidence="6">Belongs to the cysteine synthase/cystathionine beta-synthase family. SbnA subfamily.</text>
</comment>
<feature type="chain" id="PRO_0000395024" description="N-(2-amino-2-carboxyethyl)-L-glutamate synthase">
    <location>
        <begin position="1"/>
        <end position="326"/>
    </location>
</feature>
<feature type="binding site" evidence="4">
    <location>
        <position position="77"/>
    </location>
    <ligand>
        <name>pyridoxal 5'-phosphate</name>
        <dbReference type="ChEBI" id="CHEBI:597326"/>
    </ligand>
</feature>
<feature type="binding site" evidence="4">
    <location>
        <begin position="185"/>
        <end position="189"/>
    </location>
    <ligand>
        <name>pyridoxal 5'-phosphate</name>
        <dbReference type="ChEBI" id="CHEBI:597326"/>
    </ligand>
</feature>
<feature type="binding site" evidence="4">
    <location>
        <position position="272"/>
    </location>
    <ligand>
        <name>pyridoxal 5'-phosphate</name>
        <dbReference type="ChEBI" id="CHEBI:597326"/>
    </ligand>
</feature>
<feature type="modified residue" description="N6-(pyridoxal phosphate)lysine" evidence="4">
    <location>
        <position position="47"/>
    </location>
</feature>
<feature type="mutagenesis site" description="No detectable enzyme activity. Does not form pyridoxal 5'-phosphate-alpha-aminoacrylate reaction intermediate." evidence="4">
    <original>R</original>
    <variation>A</variation>
    <location>
        <position position="132"/>
    </location>
</feature>
<feature type="mutagenesis site" description="Very low enzyme activity. Does not form pyridoxal 5'-phosphate-alpha-aminoacrylate reaction intermediate; when associated with G-185." evidence="4">
    <original>Y</original>
    <variation>F</variation>
    <location>
        <position position="152"/>
    </location>
</feature>
<feature type="mutagenesis site" description="4-5 fold reduction in catalytic efficiency. Does not form pyridoxal 5'-phosphate-alpha-aminoacrylate reaction intermediate; when associated with F-152.">
    <original>S</original>
    <variation>G</variation>
    <location>
        <position position="185"/>
    </location>
</feature>
<feature type="helix" evidence="7">
    <location>
        <begin position="12"/>
        <end position="15"/>
    </location>
</feature>
<feature type="strand" evidence="7">
    <location>
        <begin position="21"/>
        <end position="23"/>
    </location>
</feature>
<feature type="turn" evidence="7">
    <location>
        <begin position="25"/>
        <end position="27"/>
    </location>
</feature>
<feature type="strand" evidence="7">
    <location>
        <begin position="31"/>
        <end position="36"/>
    </location>
</feature>
<feature type="helix" evidence="7">
    <location>
        <begin position="38"/>
        <end position="40"/>
    </location>
</feature>
<feature type="helix" evidence="7">
    <location>
        <begin position="48"/>
        <end position="60"/>
    </location>
</feature>
<feature type="strand" evidence="7">
    <location>
        <begin position="69"/>
        <end position="73"/>
    </location>
</feature>
<feature type="helix" evidence="7">
    <location>
        <begin position="77"/>
        <end position="89"/>
    </location>
</feature>
<feature type="strand" evidence="7">
    <location>
        <begin position="93"/>
        <end position="97"/>
    </location>
</feature>
<feature type="helix" evidence="7">
    <location>
        <begin position="103"/>
        <end position="111"/>
    </location>
</feature>
<feature type="strand" evidence="7">
    <location>
        <begin position="115"/>
        <end position="118"/>
    </location>
</feature>
<feature type="helix" evidence="7">
    <location>
        <begin position="129"/>
        <end position="142"/>
    </location>
</feature>
<feature type="strand" evidence="7">
    <location>
        <begin position="143"/>
        <end position="148"/>
    </location>
</feature>
<feature type="turn" evidence="7">
    <location>
        <begin position="151"/>
        <end position="153"/>
    </location>
</feature>
<feature type="helix" evidence="7">
    <location>
        <begin position="155"/>
        <end position="163"/>
    </location>
</feature>
<feature type="helix" evidence="7">
    <location>
        <begin position="165"/>
        <end position="172"/>
    </location>
</feature>
<feature type="strand" evidence="7">
    <location>
        <begin position="179"/>
        <end position="183"/>
    </location>
</feature>
<feature type="strand" evidence="7">
    <location>
        <begin position="185"/>
        <end position="187"/>
    </location>
</feature>
<feature type="helix" evidence="7">
    <location>
        <begin position="188"/>
        <end position="200"/>
    </location>
</feature>
<feature type="strand" evidence="7">
    <location>
        <begin position="205"/>
        <end position="211"/>
    </location>
</feature>
<feature type="turn" evidence="7">
    <location>
        <begin position="215"/>
        <end position="218"/>
    </location>
</feature>
<feature type="strand" evidence="7">
    <location>
        <begin position="227"/>
        <end position="229"/>
    </location>
</feature>
<feature type="helix" evidence="7">
    <location>
        <begin position="240"/>
        <end position="242"/>
    </location>
</feature>
<feature type="strand" evidence="7">
    <location>
        <begin position="245"/>
        <end position="249"/>
    </location>
</feature>
<feature type="helix" evidence="7">
    <location>
        <begin position="251"/>
        <end position="265"/>
    </location>
</feature>
<feature type="helix" evidence="7">
    <location>
        <begin position="271"/>
        <end position="284"/>
    </location>
</feature>
<feature type="strand" evidence="7">
    <location>
        <begin position="292"/>
        <end position="296"/>
    </location>
</feature>
<feature type="helix" evidence="7">
    <location>
        <begin position="301"/>
        <end position="304"/>
    </location>
</feature>
<feature type="turn" evidence="7">
    <location>
        <begin position="305"/>
        <end position="309"/>
    </location>
</feature>
<feature type="helix" evidence="7">
    <location>
        <begin position="311"/>
        <end position="320"/>
    </location>
</feature>
<feature type="helix" evidence="8">
    <location>
        <begin position="322"/>
        <end position="324"/>
    </location>
</feature>
<organism>
    <name type="scientific">Staphylococcus aureus (strain Newman)</name>
    <dbReference type="NCBI Taxonomy" id="426430"/>
    <lineage>
        <taxon>Bacteria</taxon>
        <taxon>Bacillati</taxon>
        <taxon>Bacillota</taxon>
        <taxon>Bacilli</taxon>
        <taxon>Bacillales</taxon>
        <taxon>Staphylococcaceae</taxon>
        <taxon>Staphylococcus</taxon>
    </lineage>
</organism>
<proteinExistence type="evidence at protein level"/>
<name>SBNA_STAAE</name>
<gene>
    <name evidence="5" type="primary">sbnA</name>
    <name type="ordered locus">NWMN_0060</name>
</gene>
<keyword id="KW-0002">3D-structure</keyword>
<keyword id="KW-0663">Pyridoxal phosphate</keyword>
<keyword id="KW-0808">Transferase</keyword>
<dbReference type="EC" id="2.5.1.140" evidence="3 4"/>
<dbReference type="EMBL" id="AP009351">
    <property type="protein sequence ID" value="BAF66332.1"/>
    <property type="molecule type" value="Genomic_DNA"/>
</dbReference>
<dbReference type="RefSeq" id="WP_000570808.1">
    <property type="nucleotide sequence ID" value="NZ_JBBIAE010000007.1"/>
</dbReference>
<dbReference type="PDB" id="5D84">
    <property type="method" value="X-ray"/>
    <property type="resolution" value="1.45 A"/>
    <property type="chains" value="A=1-326"/>
</dbReference>
<dbReference type="PDB" id="5D85">
    <property type="method" value="X-ray"/>
    <property type="resolution" value="1.92 A"/>
    <property type="chains" value="A=1-326"/>
</dbReference>
<dbReference type="PDB" id="5D86">
    <property type="method" value="X-ray"/>
    <property type="resolution" value="1.50 A"/>
    <property type="chains" value="A=1-326"/>
</dbReference>
<dbReference type="PDB" id="5D87">
    <property type="method" value="X-ray"/>
    <property type="resolution" value="1.50 A"/>
    <property type="chains" value="A=1-326"/>
</dbReference>
<dbReference type="PDBsum" id="5D84"/>
<dbReference type="PDBsum" id="5D85"/>
<dbReference type="PDBsum" id="5D86"/>
<dbReference type="PDBsum" id="5D87"/>
<dbReference type="SMR" id="A6QDA0"/>
<dbReference type="KEGG" id="sae:NWMN_0060"/>
<dbReference type="HOGENOM" id="CLU_021018_1_0_9"/>
<dbReference type="BRENDA" id="2.5.1.140">
    <property type="organism ID" value="3352"/>
</dbReference>
<dbReference type="EvolutionaryTrace" id="A6QDA0"/>
<dbReference type="Proteomes" id="UP000006386">
    <property type="component" value="Chromosome"/>
</dbReference>
<dbReference type="GO" id="GO:0016765">
    <property type="term" value="F:transferase activity, transferring alkyl or aryl (other than methyl) groups"/>
    <property type="evidence" value="ECO:0007669"/>
    <property type="project" value="UniProtKB-ARBA"/>
</dbReference>
<dbReference type="GO" id="GO:0006535">
    <property type="term" value="P:cysteine biosynthetic process from serine"/>
    <property type="evidence" value="ECO:0007669"/>
    <property type="project" value="InterPro"/>
</dbReference>
<dbReference type="CDD" id="cd01561">
    <property type="entry name" value="CBS_like"/>
    <property type="match status" value="1"/>
</dbReference>
<dbReference type="Gene3D" id="3.40.50.1100">
    <property type="match status" value="2"/>
</dbReference>
<dbReference type="InterPro" id="IPR050214">
    <property type="entry name" value="Cys_Synth/Cystath_Beta-Synth"/>
</dbReference>
<dbReference type="InterPro" id="IPR001216">
    <property type="entry name" value="P-phosphate_BS"/>
</dbReference>
<dbReference type="InterPro" id="IPR023927">
    <property type="entry name" value="SbnA"/>
</dbReference>
<dbReference type="InterPro" id="IPR001926">
    <property type="entry name" value="TrpB-like_PALP"/>
</dbReference>
<dbReference type="InterPro" id="IPR036052">
    <property type="entry name" value="TrpB-like_PALP_sf"/>
</dbReference>
<dbReference type="NCBIfam" id="TIGR03945">
    <property type="entry name" value="PLP_SbnA_fam"/>
    <property type="match status" value="1"/>
</dbReference>
<dbReference type="PANTHER" id="PTHR10314">
    <property type="entry name" value="CYSTATHIONINE BETA-SYNTHASE"/>
    <property type="match status" value="1"/>
</dbReference>
<dbReference type="Pfam" id="PF00291">
    <property type="entry name" value="PALP"/>
    <property type="match status" value="1"/>
</dbReference>
<dbReference type="SUPFAM" id="SSF53686">
    <property type="entry name" value="Tryptophan synthase beta subunit-like PLP-dependent enzymes"/>
    <property type="match status" value="1"/>
</dbReference>
<dbReference type="PROSITE" id="PS00901">
    <property type="entry name" value="CYS_SYNTHASE"/>
    <property type="match status" value="1"/>
</dbReference>
<protein>
    <recommendedName>
        <fullName evidence="6">N-(2-amino-2-carboxyethyl)-L-glutamate synthase</fullName>
        <shortName evidence="6">ACEGA synthase</shortName>
        <ecNumber evidence="3 4">2.5.1.140</ecNumber>
    </recommendedName>
    <alternativeName>
        <fullName evidence="6">Staphyloferrin B biosynthesis protein SbnA</fullName>
    </alternativeName>
</protein>
<accession>A6QDA0</accession>
<sequence>MIEKSQACHDSLLDSVGQTPMVQLHQLFPKHEVFAKLEYMNPGGSMKDRPAKYIIEHGIKHGLITENTHLIESTSGNLGIALAMIAKIKGLKLTCVVDPKISPTNLKIIKSYGANVEMVEEPDAHGGYLMTRIAKVQELLATIDDAYWINQYANELNWQSHYHGAGTEIVETIKQPIDYFVAPVSTTGSIMGMSRKIKEVHPNAQIVAVDAKGSVIFGDKPINRELPGIGASRVPEILNRSEINQVIHVDDYQSALGCRKLIDYEGIFAGGSTGSIIAAIEQLITSIEEGATIVTILPDRGDRYLDLVYSDTWLEKMKSRQGVKSE</sequence>
<evidence type="ECO:0000250" key="1">
    <source>
        <dbReference type="UniProtKB" id="Q2G1N3"/>
    </source>
</evidence>
<evidence type="ECO:0000269" key="2">
    <source>
    </source>
</evidence>
<evidence type="ECO:0000269" key="3">
    <source>
    </source>
</evidence>
<evidence type="ECO:0000269" key="4">
    <source>
    </source>
</evidence>
<evidence type="ECO:0000303" key="5">
    <source>
    </source>
</evidence>
<evidence type="ECO:0000305" key="6"/>
<evidence type="ECO:0007829" key="7">
    <source>
        <dbReference type="PDB" id="5D84"/>
    </source>
</evidence>
<evidence type="ECO:0007829" key="8">
    <source>
        <dbReference type="PDB" id="5D86"/>
    </source>
</evidence>